<comment type="function">
    <text evidence="1 9">May act as a transporter of organic cations based on a proton efflux antiport mechanism. May play a role in the transport of chloroquine and quinidine-related compounds in kidney (PubMed:9744804). Plays a role in the regulation of lipid metabolism (By similarity).</text>
</comment>
<comment type="subunit">
    <text evidence="4">Interacts with RNF167.</text>
</comment>
<comment type="interaction">
    <interactant intactId="EBI-11721845">
        <id>Q96BI1</id>
    </interactant>
    <interactant intactId="EBI-1052304">
        <id>Q8NBQ5</id>
        <label>HSD17B11</label>
    </interactant>
    <organismsDiffer>false</organismsDiffer>
    <experiments>3</experiments>
</comment>
<comment type="interaction">
    <interactant intactId="EBI-11721845">
        <id>Q96BI1</id>
    </interactant>
    <interactant intactId="EBI-1385894">
        <id>Q99801</id>
        <label>NKX3-1</label>
    </interactant>
    <organismsDiffer>false</organismsDiffer>
    <experiments>3</experiments>
</comment>
<comment type="interaction">
    <interactant intactId="EBI-11721845">
        <id>Q96BI1</id>
    </interactant>
    <interactant intactId="EBI-12947623">
        <id>Q96MV1</id>
        <label>TLCD4</label>
    </interactant>
    <organismsDiffer>false</organismsDiffer>
    <experiments>3</experiments>
</comment>
<comment type="interaction">
    <interactant intactId="EBI-11721845">
        <id>Q96BI1</id>
    </interactant>
    <interactant intactId="EBI-6447886">
        <id>Q9Y320</id>
        <label>TMX2</label>
    </interactant>
    <organismsDiffer>false</organismsDiffer>
    <experiments>3</experiments>
</comment>
<comment type="subcellular location">
    <subcellularLocation>
        <location evidence="9">Apical cell membrane</location>
        <topology evidence="17">Multi-pass membrane protein</topology>
    </subcellularLocation>
    <text evidence="9">Localized at the apical membrane surface of renal proximal tubules.</text>
</comment>
<comment type="tissue specificity">
    <text evidence="6 7 8 9">Expressed at high levels in adult and fetal kidney and liver, and adult colon. Expressed in fetal renal proximal tubules (at protein level). Expressed at lower levels in heart, brain and lung.</text>
</comment>
<comment type="disease" evidence="10">
    <disease id="DI-02205">
        <name>Lung cancer</name>
        <acronym>LNCR</acronym>
        <description>A common malignancy affecting tissues of the lung. The most common form of lung cancer is non-small cell lung cancer (NSCLC) that can be divided into 3 major histologic subtypes: squamous cell carcinoma, adenocarcinoma, and large cell lung cancer. NSCLC is often diagnosed at an advanced stage and has a poor prognosis.</description>
        <dbReference type="MIM" id="211980"/>
    </disease>
    <text>The gene represented in this entry may be involved in disease pathogenesis.</text>
</comment>
<comment type="disease" evidence="7">
    <disease id="DI-02267">
        <name>Rhabdomyosarcoma, embryonal, 1</name>
        <acronym>RMSE1</acronym>
        <description>A form of rhabdomyosarcoma, a highly malignant tumor of striated muscle derived from primitive mesenchymal cells and exhibiting differentiation along rhabdomyoblastic lines. Rhabdomyosarcoma is one of the most frequently occurring soft tissue sarcomas and the most common in children. It occurs in four forms: alveolar, pleomorphic, embryonal and botryoidal rhabdomyosarcomas.</description>
        <dbReference type="MIM" id="268210"/>
    </disease>
    <text>The disease may be caused by variants affecting the gene represented in this entry.</text>
</comment>
<comment type="similarity">
    <text evidence="17">Belongs to the major facilitator (TC 2.A.1) superfamily. Organic cation transporter (TC 2.A.1.19) family.</text>
</comment>
<comment type="caution">
    <text evidence="5">Was initially classified as a member of the SLC22 family. However, an evolutionary and phylogenetic analysis suggested that SLC22A18 is unique and that it is most distantly related to SLC22 family members.</text>
</comment>
<comment type="caution">
    <text evidence="17">It is uncertain whether Met-1 or Met-17 is the initiator.</text>
</comment>
<comment type="sequence caution" evidence="17">
    <conflict type="erroneous initiation">
        <sequence resource="EMBL-CDS" id="AAB82727"/>
    </conflict>
</comment>
<comment type="sequence caution" evidence="17">
    <conflict type="erroneous initiation">
        <sequence resource="EMBL-CDS" id="BAA32779"/>
    </conflict>
</comment>
<protein>
    <recommendedName>
        <fullName>Solute carrier family 67 member A1</fullName>
    </recommendedName>
    <alternativeName>
        <fullName>Beckwith-Wiedemann syndrome chromosomal region 1 candidate gene A protein</fullName>
    </alternativeName>
    <alternativeName>
        <fullName>Efflux transporter-like protein</fullName>
    </alternativeName>
    <alternativeName>
        <fullName evidence="15">Imprinted multi-membrane-spanning polyspecific transporter-related protein 1</fullName>
    </alternativeName>
    <alternativeName>
        <fullName evidence="14">Organic cation transporter-like protein 2</fullName>
        <shortName evidence="14">ORCTL-2</shortName>
    </alternativeName>
    <alternativeName>
        <fullName>Solute carrier family 22 member 1-like</fullName>
    </alternativeName>
    <alternativeName>
        <fullName>Solute carrier family 22 member 18</fullName>
    </alternativeName>
    <alternativeName>
        <fullName evidence="15">Tumor-suppressing STF cDNA 5 protein</fullName>
    </alternativeName>
    <alternativeName>
        <fullName>Tumor-suppressing subchromosomal transferable fragment candidate gene 5 protein</fullName>
    </alternativeName>
    <alternativeName>
        <fullName>p45-Beckwith-Wiedemann region 1 A</fullName>
        <shortName>p45-BWR1A</shortName>
    </alternativeName>
</protein>
<feature type="chain" id="PRO_0000220509" description="Solute carrier family 67 member A1">
    <location>
        <begin position="1"/>
        <end position="424"/>
    </location>
</feature>
<feature type="transmembrane region" description="Helical" evidence="2">
    <location>
        <begin position="26"/>
        <end position="46"/>
    </location>
</feature>
<feature type="transmembrane region" description="Helical" evidence="2">
    <location>
        <begin position="59"/>
        <end position="79"/>
    </location>
</feature>
<feature type="transmembrane region" description="Helical" evidence="2">
    <location>
        <begin position="90"/>
        <end position="110"/>
    </location>
</feature>
<feature type="transmembrane region" description="Helical" evidence="2">
    <location>
        <begin position="156"/>
        <end position="176"/>
    </location>
</feature>
<feature type="transmembrane region" description="Helical" evidence="2">
    <location>
        <begin position="184"/>
        <end position="204"/>
    </location>
</feature>
<feature type="transmembrane region" description="Helical" evidence="2">
    <location>
        <begin position="243"/>
        <end position="263"/>
    </location>
</feature>
<feature type="transmembrane region" description="Helical" evidence="2">
    <location>
        <begin position="276"/>
        <end position="296"/>
    </location>
</feature>
<feature type="transmembrane region" description="Helical" evidence="2">
    <location>
        <begin position="312"/>
        <end position="332"/>
    </location>
</feature>
<feature type="transmembrane region" description="Helical" evidence="2">
    <location>
        <begin position="334"/>
        <end position="354"/>
    </location>
</feature>
<feature type="transmembrane region" description="Helical" evidence="2">
    <location>
        <begin position="391"/>
        <end position="411"/>
    </location>
</feature>
<feature type="sequence variant" id="VAR_055406" description="In dbSNP:rs1048046." evidence="7">
    <original>A</original>
    <variation>T</variation>
    <location>
        <position position="6"/>
    </location>
</feature>
<feature type="sequence variant" id="VAR_055407" description="In dbSNP:rs1048047." evidence="3 7 8 11">
    <original>R</original>
    <variation>Q</variation>
    <location>
        <position position="12"/>
    </location>
</feature>
<feature type="sequence variant" id="VAR_024061" description="In a rhabdomyosarcoma sample." evidence="7">
    <original>R</original>
    <variation>C</variation>
    <location>
        <position position="86"/>
    </location>
</feature>
<feature type="sequence variant" id="VAR_024062" description="In lung cancer; somatic mutation; dbSNP:rs121909071." evidence="10">
    <original>S</original>
    <variation>F</variation>
    <location>
        <position position="233"/>
    </location>
</feature>
<feature type="sequence variant" id="VAR_024063" description="In dbSNP:rs141165353." evidence="10">
    <original>R</original>
    <variation>Q</variation>
    <location>
        <position position="309"/>
    </location>
</feature>
<feature type="sequence variant" id="VAR_055408" description="In dbSNP:rs1129782.">
    <original>W</original>
    <variation>C</variation>
    <location>
        <position position="324"/>
    </location>
</feature>
<feature type="sequence conflict" description="In Ref. 5; AAC17492." evidence="17" ref="5">
    <original>D</original>
    <variation>N</variation>
    <location>
        <position position="84"/>
    </location>
</feature>
<feature type="sequence conflict" description="In Ref. 4; AAB82727 and 6; AAC23505." evidence="17" ref="4 6">
    <original>D</original>
    <variation>E</variation>
    <location>
        <position position="227"/>
    </location>
</feature>
<feature type="sequence conflict" description="In Ref. 4; AAB82727 and 6; AAC23505." evidence="17" ref="4 6">
    <original>A</original>
    <variation>G</variation>
    <location>
        <position position="230"/>
    </location>
</feature>
<feature type="sequence conflict" description="In Ref. 4; AAB82727 and 6; AAC23505." evidence="17" ref="4 6">
    <original>R</original>
    <variation>K</variation>
    <location>
        <position position="242"/>
    </location>
</feature>
<feature type="sequence conflict" description="In Ref. 4; AAB82727 and 6; AAC23505." evidence="17" ref="4 6">
    <original>Q</original>
    <variation>K</variation>
    <location>
        <position position="275"/>
    </location>
</feature>
<feature type="sequence conflict" description="In Ref. 3; AAC04787." evidence="17" ref="3">
    <original>L</original>
    <variation>M</variation>
    <location>
        <position position="307"/>
    </location>
</feature>
<feature type="sequence conflict" description="In Ref. 4; AAB82727 and 6; AAC23505." evidence="17" ref="4 6">
    <original>R</original>
    <variation>G</variation>
    <location>
        <position position="309"/>
    </location>
</feature>
<organism>
    <name type="scientific">Homo sapiens</name>
    <name type="common">Human</name>
    <dbReference type="NCBI Taxonomy" id="9606"/>
    <lineage>
        <taxon>Eukaryota</taxon>
        <taxon>Metazoa</taxon>
        <taxon>Chordata</taxon>
        <taxon>Craniata</taxon>
        <taxon>Vertebrata</taxon>
        <taxon>Euteleostomi</taxon>
        <taxon>Mammalia</taxon>
        <taxon>Eutheria</taxon>
        <taxon>Euarchontoglires</taxon>
        <taxon>Primates</taxon>
        <taxon>Haplorrhini</taxon>
        <taxon>Catarrhini</taxon>
        <taxon>Hominidae</taxon>
        <taxon>Homo</taxon>
    </lineage>
</organism>
<proteinExistence type="evidence at protein level"/>
<dbReference type="EMBL" id="AF059663">
    <property type="protein sequence ID" value="AAC14725.1"/>
    <property type="molecule type" value="mRNA"/>
</dbReference>
<dbReference type="EMBL" id="AB012083">
    <property type="protein sequence ID" value="BAA32779.1"/>
    <property type="status" value="ALT_INIT"/>
    <property type="molecule type" value="mRNA"/>
</dbReference>
<dbReference type="EMBL" id="AF037064">
    <property type="protein sequence ID" value="AAC04787.1"/>
    <property type="molecule type" value="mRNA"/>
</dbReference>
<dbReference type="EMBL" id="AF028738">
    <property type="protein sequence ID" value="AAB82727.1"/>
    <property type="status" value="ALT_INIT"/>
    <property type="molecule type" value="mRNA"/>
</dbReference>
<dbReference type="EMBL" id="AF030302">
    <property type="protein sequence ID" value="AAC17492.1"/>
    <property type="molecule type" value="mRNA"/>
</dbReference>
<dbReference type="EMBL" id="AF070479">
    <property type="protein sequence ID" value="AAC23505.1"/>
    <property type="molecule type" value="mRNA"/>
</dbReference>
<dbReference type="EMBL" id="BC015571">
    <property type="protein sequence ID" value="AAH15571.1"/>
    <property type="molecule type" value="mRNA"/>
</dbReference>
<dbReference type="CCDS" id="CCDS7740.1"/>
<dbReference type="RefSeq" id="NP_001302430.1">
    <property type="nucleotide sequence ID" value="NM_001315501.1"/>
</dbReference>
<dbReference type="RefSeq" id="NP_001302431.1">
    <property type="nucleotide sequence ID" value="NM_001315502.1"/>
</dbReference>
<dbReference type="RefSeq" id="NP_002546.3">
    <property type="nucleotide sequence ID" value="NM_002555.5"/>
</dbReference>
<dbReference type="RefSeq" id="NP_899056.2">
    <property type="nucleotide sequence ID" value="NM_183233.2"/>
</dbReference>
<dbReference type="RefSeq" id="XP_047282989.1">
    <property type="nucleotide sequence ID" value="XM_047427033.1"/>
</dbReference>
<dbReference type="SMR" id="Q96BI1"/>
<dbReference type="BioGRID" id="111044">
    <property type="interactions" value="99"/>
</dbReference>
<dbReference type="FunCoup" id="Q96BI1">
    <property type="interactions" value="670"/>
</dbReference>
<dbReference type="IntAct" id="Q96BI1">
    <property type="interactions" value="47"/>
</dbReference>
<dbReference type="MINT" id="Q96BI1"/>
<dbReference type="STRING" id="9606.ENSP00000369948"/>
<dbReference type="TCDB" id="2.A.1.2.53">
    <property type="family name" value="the major facilitator superfamily (mfs)"/>
</dbReference>
<dbReference type="GlyGen" id="Q96BI1">
    <property type="glycosylation" value="1 site"/>
</dbReference>
<dbReference type="iPTMnet" id="Q96BI1"/>
<dbReference type="PhosphoSitePlus" id="Q96BI1"/>
<dbReference type="SwissPalm" id="Q96BI1"/>
<dbReference type="BioMuta" id="SLC22A18"/>
<dbReference type="DMDM" id="238054368"/>
<dbReference type="jPOST" id="Q96BI1"/>
<dbReference type="MassIVE" id="Q96BI1"/>
<dbReference type="PaxDb" id="9606-ENSP00000369948"/>
<dbReference type="PeptideAtlas" id="Q96BI1"/>
<dbReference type="ProteomicsDB" id="76077"/>
<dbReference type="Pumba" id="Q96BI1"/>
<dbReference type="Antibodypedia" id="23193">
    <property type="antibodies" value="138 antibodies from 27 providers"/>
</dbReference>
<dbReference type="DNASU" id="5002"/>
<dbReference type="Ensembl" id="ENST00000347936.6">
    <property type="protein sequence ID" value="ENSP00000307859.2"/>
    <property type="gene ID" value="ENSG00000110628.16"/>
</dbReference>
<dbReference type="Ensembl" id="ENST00000380574.5">
    <property type="protein sequence ID" value="ENSP00000369948.1"/>
    <property type="gene ID" value="ENSG00000110628.16"/>
</dbReference>
<dbReference type="Ensembl" id="ENST00000649076.2">
    <property type="protein sequence ID" value="ENSP00000497561.1"/>
    <property type="gene ID" value="ENSG00000110628.16"/>
</dbReference>
<dbReference type="GeneID" id="5002"/>
<dbReference type="KEGG" id="hsa:5002"/>
<dbReference type="MANE-Select" id="ENST00000649076.2">
    <property type="protein sequence ID" value="ENSP00000497561.1"/>
    <property type="RefSeq nucleotide sequence ID" value="NM_002555.6"/>
    <property type="RefSeq protein sequence ID" value="NP_002546.3"/>
</dbReference>
<dbReference type="UCSC" id="uc001lwx.3">
    <property type="organism name" value="human"/>
</dbReference>
<dbReference type="AGR" id="HGNC:10964"/>
<dbReference type="CTD" id="5002"/>
<dbReference type="DisGeNET" id="5002"/>
<dbReference type="GeneCards" id="SLC22A18"/>
<dbReference type="HGNC" id="HGNC:10964">
    <property type="gene designation" value="SLC67A1"/>
</dbReference>
<dbReference type="HPA" id="ENSG00000110628">
    <property type="expression patterns" value="Tissue enhanced (intestine, liver)"/>
</dbReference>
<dbReference type="MalaCards" id="SLC22A18"/>
<dbReference type="MIM" id="114480">
    <property type="type" value="phenotype"/>
</dbReference>
<dbReference type="MIM" id="211980">
    <property type="type" value="phenotype"/>
</dbReference>
<dbReference type="MIM" id="268210">
    <property type="type" value="phenotype"/>
</dbReference>
<dbReference type="MIM" id="602631">
    <property type="type" value="gene"/>
</dbReference>
<dbReference type="neXtProt" id="NX_Q96BI1"/>
<dbReference type="OpenTargets" id="ENSG00000110628"/>
<dbReference type="Orphanet" id="99757">
    <property type="disease" value="Embryonal rhabdomyosarcoma"/>
</dbReference>
<dbReference type="Orphanet" id="227535">
    <property type="disease" value="Hereditary breast cancer"/>
</dbReference>
<dbReference type="PharmGKB" id="PA35846"/>
<dbReference type="VEuPathDB" id="HostDB:ENSG00000110628"/>
<dbReference type="eggNOG" id="ENOG502QT94">
    <property type="taxonomic scope" value="Eukaryota"/>
</dbReference>
<dbReference type="GeneTree" id="ENSGT00940000160333"/>
<dbReference type="HOGENOM" id="CLU_001265_10_1_1"/>
<dbReference type="InParanoid" id="Q96BI1"/>
<dbReference type="OMA" id="RLMKYPR"/>
<dbReference type="OrthoDB" id="440553at2759"/>
<dbReference type="PAN-GO" id="Q96BI1">
    <property type="GO annotations" value="0 GO annotations based on evolutionary models"/>
</dbReference>
<dbReference type="PhylomeDB" id="Q96BI1"/>
<dbReference type="TreeFam" id="TF352510"/>
<dbReference type="PathwayCommons" id="Q96BI1"/>
<dbReference type="Reactome" id="R-HSA-549127">
    <property type="pathway name" value="Organic cation transport"/>
</dbReference>
<dbReference type="Reactome" id="R-HSA-5619066">
    <property type="pathway name" value="Defective SLC22A18 causes lung cancer (LNCR) and embryonal rhabdomyosarcoma 1 (RMSE1)"/>
</dbReference>
<dbReference type="SignaLink" id="Q96BI1"/>
<dbReference type="SIGNOR" id="Q96BI1"/>
<dbReference type="BioGRID-ORCS" id="5002">
    <property type="hits" value="10 hits in 1169 CRISPR screens"/>
</dbReference>
<dbReference type="GeneWiki" id="SLC22A18"/>
<dbReference type="GenomeRNAi" id="5002"/>
<dbReference type="Pharos" id="Q96BI1">
    <property type="development level" value="Tbio"/>
</dbReference>
<dbReference type="PRO" id="PR:Q96BI1"/>
<dbReference type="Proteomes" id="UP000005640">
    <property type="component" value="Chromosome 11"/>
</dbReference>
<dbReference type="RNAct" id="Q96BI1">
    <property type="molecule type" value="protein"/>
</dbReference>
<dbReference type="Bgee" id="ENSG00000110628">
    <property type="expression patterns" value="Expressed in mucosa of transverse colon and 94 other cell types or tissues"/>
</dbReference>
<dbReference type="ExpressionAtlas" id="Q96BI1">
    <property type="expression patterns" value="baseline and differential"/>
</dbReference>
<dbReference type="GO" id="GO:0016324">
    <property type="term" value="C:apical plasma membrane"/>
    <property type="evidence" value="ECO:0000314"/>
    <property type="project" value="ARUK-UCL"/>
</dbReference>
<dbReference type="GO" id="GO:0005737">
    <property type="term" value="C:cytoplasm"/>
    <property type="evidence" value="ECO:0000314"/>
    <property type="project" value="UniProtKB"/>
</dbReference>
<dbReference type="GO" id="GO:0016020">
    <property type="term" value="C:membrane"/>
    <property type="evidence" value="ECO:0007005"/>
    <property type="project" value="UniProtKB"/>
</dbReference>
<dbReference type="GO" id="GO:0005635">
    <property type="term" value="C:nuclear envelope"/>
    <property type="evidence" value="ECO:0000314"/>
    <property type="project" value="UniProtKB"/>
</dbReference>
<dbReference type="GO" id="GO:0005886">
    <property type="term" value="C:plasma membrane"/>
    <property type="evidence" value="ECO:0000304"/>
    <property type="project" value="Reactome"/>
</dbReference>
<dbReference type="GO" id="GO:0015293">
    <property type="term" value="F:symporter activity"/>
    <property type="evidence" value="ECO:0007669"/>
    <property type="project" value="UniProtKB-KW"/>
</dbReference>
<dbReference type="GO" id="GO:0031625">
    <property type="term" value="F:ubiquitin protein ligase binding"/>
    <property type="evidence" value="ECO:0000353"/>
    <property type="project" value="UniProtKB"/>
</dbReference>
<dbReference type="GO" id="GO:0042910">
    <property type="term" value="F:xenobiotic transmembrane transporter activity"/>
    <property type="evidence" value="ECO:0000304"/>
    <property type="project" value="Reactome"/>
</dbReference>
<dbReference type="GO" id="GO:0006811">
    <property type="term" value="P:monoatomic ion transport"/>
    <property type="evidence" value="ECO:0007669"/>
    <property type="project" value="UniProtKB-KW"/>
</dbReference>
<dbReference type="GO" id="GO:0015695">
    <property type="term" value="P:organic cation transport"/>
    <property type="evidence" value="ECO:0000303"/>
    <property type="project" value="UniProtKB"/>
</dbReference>
<dbReference type="GO" id="GO:1990961">
    <property type="term" value="P:xenobiotic detoxification by transmembrane export across the plasma membrane"/>
    <property type="evidence" value="ECO:0000314"/>
    <property type="project" value="UniProtKB"/>
</dbReference>
<dbReference type="GO" id="GO:0042908">
    <property type="term" value="P:xenobiotic transport"/>
    <property type="evidence" value="ECO:0000314"/>
    <property type="project" value="UniProtKB"/>
</dbReference>
<dbReference type="CDD" id="cd17331">
    <property type="entry name" value="MFS_SLC22A18"/>
    <property type="match status" value="1"/>
</dbReference>
<dbReference type="FunFam" id="1.20.1250.20:FF:000297">
    <property type="entry name" value="Solute carrier family 22 member 18"/>
    <property type="match status" value="1"/>
</dbReference>
<dbReference type="Gene3D" id="1.20.1250.20">
    <property type="entry name" value="MFS general substrate transporter like domains"/>
    <property type="match status" value="1"/>
</dbReference>
<dbReference type="InterPro" id="IPR011701">
    <property type="entry name" value="MFS"/>
</dbReference>
<dbReference type="InterPro" id="IPR020846">
    <property type="entry name" value="MFS_dom"/>
</dbReference>
<dbReference type="InterPro" id="IPR036259">
    <property type="entry name" value="MFS_trans_sf"/>
</dbReference>
<dbReference type="InterPro" id="IPR001958">
    <property type="entry name" value="Tet-R_TetA/multi-R_MdtG-like"/>
</dbReference>
<dbReference type="PANTHER" id="PTHR24002">
    <property type="entry name" value="SOLUTE CARRIER FAMILY 22 MEMBER 18"/>
    <property type="match status" value="1"/>
</dbReference>
<dbReference type="PANTHER" id="PTHR24002:SF3">
    <property type="entry name" value="SOLUTE CARRIER FAMILY 22 MEMBER 18"/>
    <property type="match status" value="1"/>
</dbReference>
<dbReference type="Pfam" id="PF07690">
    <property type="entry name" value="MFS_1"/>
    <property type="match status" value="1"/>
</dbReference>
<dbReference type="PRINTS" id="PR01035">
    <property type="entry name" value="TCRTETA"/>
</dbReference>
<dbReference type="SUPFAM" id="SSF103473">
    <property type="entry name" value="MFS general substrate transporter"/>
    <property type="match status" value="1"/>
</dbReference>
<dbReference type="PROSITE" id="PS50850">
    <property type="entry name" value="MFS"/>
    <property type="match status" value="1"/>
</dbReference>
<name>S67A1_HUMAN</name>
<evidence type="ECO:0000250" key="1">
    <source>
        <dbReference type="UniProtKB" id="Q78KK3"/>
    </source>
</evidence>
<evidence type="ECO:0000255" key="2"/>
<evidence type="ECO:0000269" key="3">
    <source>
    </source>
</evidence>
<evidence type="ECO:0000269" key="4">
    <source>
    </source>
</evidence>
<evidence type="ECO:0000269" key="5">
    <source>
    </source>
</evidence>
<evidence type="ECO:0000269" key="6">
    <source>
    </source>
</evidence>
<evidence type="ECO:0000269" key="7">
    <source>
    </source>
</evidence>
<evidence type="ECO:0000269" key="8">
    <source>
    </source>
</evidence>
<evidence type="ECO:0000269" key="9">
    <source>
    </source>
</evidence>
<evidence type="ECO:0000269" key="10">
    <source>
    </source>
</evidence>
<evidence type="ECO:0000269" key="11">
    <source ref="6"/>
</evidence>
<evidence type="ECO:0000303" key="12">
    <source>
    </source>
</evidence>
<evidence type="ECO:0000303" key="13">
    <source>
    </source>
</evidence>
<evidence type="ECO:0000303" key="14">
    <source>
    </source>
</evidence>
<evidence type="ECO:0000303" key="15">
    <source>
    </source>
</evidence>
<evidence type="ECO:0000303" key="16">
    <source>
    </source>
</evidence>
<evidence type="ECO:0000305" key="17"/>
<evidence type="ECO:0000312" key="18">
    <source>
        <dbReference type="HGNC" id="HGNC:10964"/>
    </source>
</evidence>
<gene>
    <name evidence="18" type="primary">SLC67A1</name>
    <name evidence="13" type="synonym">BWR1A</name>
    <name type="synonym">BWSCR1A</name>
    <name type="synonym">HET</name>
    <name evidence="12" type="synonym">IMPT1</name>
    <name evidence="16" type="synonym">ITM</name>
    <name evidence="14" type="synonym">ORCTL2</name>
    <name type="synonym">SLC22A18</name>
    <name type="synonym">SLC22A1L</name>
    <name evidence="15" type="synonym">TSSC5</name>
</gene>
<sequence length="424" mass="44846">MQGARAPRDQGRSPGRMSALGRSSVILLTYVLAATELTCLFMQFSIVPYLSRKLGLDSIAFGYLQTTFGVLQLLGGPVFGRFADQRGARAALTLSFLAALALYLLLAAASSPALPGVYLLFASRLPGALMHTLPAAQMVITDLSAPEERPAALGRLGLCFGVGVILGSLLGGTLVSAYGIQCPAILAALATLLGAVLSFTCIPASTKGAKTDAQAPLPGGPRASVFDLKAIASLLRLPDVPRIFLVKVASNCPTGLFMVMFSIISMDFFQLEAAQAGYLMSFFGLLQMVTQGLVIGQLSSHFSEEVLLRASVLVFIVVGLAMAWMSSVFHFCLLVPGLVFSLCTLNVVTDSMLIKAVSTSDTGTMLGLCASVQPLLRTLGPTVGGLLYRSFGVPVFGHVQVAINTLVLLVLWRKPMPQRKDKVR</sequence>
<keyword id="KW-1003">Cell membrane</keyword>
<keyword id="KW-0225">Disease variant</keyword>
<keyword id="KW-0472">Membrane</keyword>
<keyword id="KW-1267">Proteomics identification</keyword>
<keyword id="KW-1185">Reference proteome</keyword>
<keyword id="KW-0812">Transmembrane</keyword>
<keyword id="KW-1133">Transmembrane helix</keyword>
<accession>Q96BI1</accession>
<accession>O14906</accession>
<accession>O43562</accession>
<accession>O60485</accession>
<accession>O60680</accession>
<accession>Q7LDS5</accession>
<accession>Q7LGF7</accession>
<reference key="1">
    <citation type="journal article" date="1998" name="Cancer Res.">
        <title>Somatic mutation of TSSC5, a novel imprinted gene from human chromosome 11p15.5.</title>
        <authorList>
            <person name="Lee M.P."/>
            <person name="Reeves C."/>
            <person name="Schmitt A."/>
            <person name="Su K."/>
            <person name="Connors T.D."/>
            <person name="Hu R.J."/>
            <person name="Brandenburg S."/>
            <person name="Lee M.J."/>
            <person name="Miller G."/>
            <person name="Feinberg A.P."/>
        </authorList>
    </citation>
    <scope>NUCLEOTIDE SEQUENCE [MRNA]</scope>
    <scope>VARIANT GLN-309</scope>
    <scope>VARIANT LUNG CANCER PHE-233</scope>
</reference>
<reference key="2">
    <citation type="journal article" date="1998" name="DNA Res.">
        <title>A novel gene, ITM, located between p57KIP2 and IPL, is imprinted in mice.</title>
        <authorList>
            <person name="Morisaki H."/>
            <person name="Hatada I."/>
            <person name="Morisaki T."/>
            <person name="Mukai T."/>
        </authorList>
    </citation>
    <scope>NUCLEOTIDE SEQUENCE [MRNA]</scope>
</reference>
<reference key="3">
    <citation type="journal article" date="1998" name="Genomics">
        <title>Divergently transcribed overlapping genes expressed in liver and kidney and located in the 11p15.5 imprinted domain.</title>
        <authorList>
            <person name="Cooper P.R."/>
            <person name="Smilinich N.J."/>
            <person name="Day C.D."/>
            <person name="Nowak N.J."/>
            <person name="Reid L.H."/>
            <person name="Pearsall R.S."/>
            <person name="Reece M."/>
            <person name="Prawitt D."/>
            <person name="Landers J."/>
            <person name="Housman D.E."/>
            <person name="Winterpacht A."/>
            <person name="Zabel B.U."/>
            <person name="Pelletier J."/>
            <person name="Weissman B.E."/>
            <person name="Shows T.B."/>
            <person name="Higgins M.J."/>
        </authorList>
    </citation>
    <scope>NUCLEOTIDE SEQUENCE [MRNA]</scope>
    <scope>TISSUE SPECIFICITY</scope>
    <scope>VARIANT GLN-12</scope>
</reference>
<reference key="4">
    <citation type="journal article" date="1998" name="Hum. Mol. Genet.">
        <title>IMPT1, an imprinted gene similar to polyspecific transporter and multi-drug resistance genes.</title>
        <authorList>
            <person name="Dao D."/>
            <person name="Frank D."/>
            <person name="Qian N."/>
            <person name="O'Keefe D."/>
            <person name="Vosatka R.J."/>
            <person name="Walsh C.P."/>
            <person name="Tycko B."/>
        </authorList>
    </citation>
    <scope>NUCLEOTIDE SEQUENCE [MRNA]</scope>
    <scope>TISSUE SPECIFICITY</scope>
    <source>
        <tissue>Placenta</tissue>
    </source>
</reference>
<reference key="5">
    <citation type="journal article" date="1998" name="Proc. Natl. Acad. Sci. U.S.A.">
        <title>Transcriptional map of 170-kb region at chromosome 11p15.5: identification and mutational analysis of the BWR1A gene reveals the presence of mutations in tumor samples.</title>
        <authorList>
            <person name="Schwienbacher C."/>
            <person name="Sabbioni S."/>
            <person name="Campi M."/>
            <person name="Veronese A."/>
            <person name="Bernardi G."/>
            <person name="Menegatti A."/>
            <person name="Hatada I."/>
            <person name="Mukai T."/>
            <person name="Ohashi H."/>
            <person name="Barbanti-Brodano G."/>
            <person name="Croce C.M."/>
            <person name="Negrini M."/>
        </authorList>
    </citation>
    <scope>NUCLEOTIDE SEQUENCE [MRNA]</scope>
    <scope>POSSIBLE INVOLVEMENT IN RMSE1</scope>
    <scope>VARIANTS THR-6 AND GLN-12; CYS-86</scope>
    <scope>TISSUE SPECIFICITY</scope>
</reference>
<reference key="6">
    <citation type="submission" date="1998-05" db="EMBL/GenBank/DDBJ databases">
        <title>Monoallelic expression of the gene encoding a human efflux transporter like protein (HET), on chromosome 11p15.5.</title>
        <authorList>
            <person name="Chen P."/>
            <person name="Shen W."/>
            <person name="Karnik P."/>
        </authorList>
    </citation>
    <scope>NUCLEOTIDE SEQUENCE [MRNA]</scope>
    <scope>VARIANT GLN-12</scope>
</reference>
<reference key="7">
    <citation type="journal article" date="2004" name="Genome Res.">
        <title>The status, quality, and expansion of the NIH full-length cDNA project: the Mammalian Gene Collection (MGC).</title>
        <authorList>
            <consortium name="The MGC Project Team"/>
        </authorList>
    </citation>
    <scope>NUCLEOTIDE SEQUENCE [LARGE SCALE MRNA]</scope>
    <scope>VARIANT GLN-12</scope>
    <source>
        <tissue>Placenta</tissue>
    </source>
</reference>
<reference key="8">
    <citation type="journal article" date="1998" name="FEBS Lett.">
        <title>Functional characterization of ORCTL2 -- an organic cation transporter expressed in the renal proximal tubules.</title>
        <authorList>
            <person name="Reece M."/>
            <person name="Prawitt D."/>
            <person name="Landers J."/>
            <person name="Kast C."/>
            <person name="Gros P."/>
            <person name="Housman D."/>
            <person name="Zabel B.U."/>
            <person name="Pelletier J."/>
        </authorList>
    </citation>
    <scope>FUNCTION</scope>
    <scope>SUBCELLULAR LOCATION</scope>
    <scope>TISSUE SPECIFICITY</scope>
</reference>
<reference key="9">
    <citation type="journal article" date="2006" name="Oncogene">
        <title>Tumor suppressor candidate TSSC5 is regulated by UbcH6 and a novel ubiquitin ligase RING105.</title>
        <authorList>
            <person name="Yamada H.Y."/>
            <person name="Gorbsky G.J."/>
        </authorList>
    </citation>
    <scope>INTERACTION WITH RNF167</scope>
</reference>
<reference key="10">
    <citation type="journal article" date="2015" name="PLoS ONE">
        <title>Evolutionary Analysis and Classification of OATs, OCTs, OCTNs, and Other SLC22 Transporters: Structure-Function Implications and Analysis of Sequence Motifs.</title>
        <authorList>
            <person name="Zhu C."/>
            <person name="Nigam K.B."/>
            <person name="Date R.C."/>
            <person name="Bush K.T."/>
            <person name="Springer S.A."/>
            <person name="Saier M.H. Jr."/>
            <person name="Wu W."/>
            <person name="Nigam S.K."/>
        </authorList>
    </citation>
    <scope>PHYLOGENETIC ANALYSIS</scope>
</reference>